<keyword id="KW-0004">4Fe-4S</keyword>
<keyword id="KW-0150">Chloroplast</keyword>
<keyword id="KW-0408">Iron</keyword>
<keyword id="KW-0411">Iron-sulfur</keyword>
<keyword id="KW-0472">Membrane</keyword>
<keyword id="KW-0479">Metal-binding</keyword>
<keyword id="KW-0520">NAD</keyword>
<keyword id="KW-0521">NADP</keyword>
<keyword id="KW-0934">Plastid</keyword>
<keyword id="KW-0618">Plastoquinone</keyword>
<keyword id="KW-0874">Quinone</keyword>
<keyword id="KW-0677">Repeat</keyword>
<keyword id="KW-0793">Thylakoid</keyword>
<keyword id="KW-1278">Translocase</keyword>
<evidence type="ECO:0000255" key="1">
    <source>
        <dbReference type="HAMAP-Rule" id="MF_01351"/>
    </source>
</evidence>
<name>NDHI_NANDO</name>
<proteinExistence type="inferred from homology"/>
<reference key="1">
    <citation type="journal article" date="2006" name="BMC Plant Biol.">
        <title>Rapid and accurate pyrosequencing of angiosperm plastid genomes.</title>
        <authorList>
            <person name="Moore M.J."/>
            <person name="Dhingra A."/>
            <person name="Soltis P.S."/>
            <person name="Shaw R."/>
            <person name="Farmerie W.G."/>
            <person name="Folta K.M."/>
            <person name="Soltis D.E."/>
        </authorList>
    </citation>
    <scope>NUCLEOTIDE SEQUENCE [LARGE SCALE GENOMIC DNA]</scope>
</reference>
<organism>
    <name type="scientific">Nandina domestica</name>
    <name type="common">Heavenly bamboo</name>
    <dbReference type="NCBI Taxonomy" id="41776"/>
    <lineage>
        <taxon>Eukaryota</taxon>
        <taxon>Viridiplantae</taxon>
        <taxon>Streptophyta</taxon>
        <taxon>Embryophyta</taxon>
        <taxon>Tracheophyta</taxon>
        <taxon>Spermatophyta</taxon>
        <taxon>Magnoliopsida</taxon>
        <taxon>Ranunculales</taxon>
        <taxon>Berberidaceae</taxon>
        <taxon>Nandinoideae</taxon>
        <taxon>Nandineae</taxon>
        <taxon>Nandina</taxon>
    </lineage>
</organism>
<dbReference type="EC" id="7.1.1.-" evidence="1"/>
<dbReference type="EMBL" id="DQ923117">
    <property type="protein sequence ID" value="ABI49919.1"/>
    <property type="molecule type" value="Genomic_DNA"/>
</dbReference>
<dbReference type="RefSeq" id="YP_740705.1">
    <property type="nucleotide sequence ID" value="NC_008336.1"/>
</dbReference>
<dbReference type="SMR" id="Q09FQ6"/>
<dbReference type="GeneID" id="4271653"/>
<dbReference type="GO" id="GO:0009535">
    <property type="term" value="C:chloroplast thylakoid membrane"/>
    <property type="evidence" value="ECO:0007669"/>
    <property type="project" value="UniProtKB-SubCell"/>
</dbReference>
<dbReference type="GO" id="GO:0051539">
    <property type="term" value="F:4 iron, 4 sulfur cluster binding"/>
    <property type="evidence" value="ECO:0007669"/>
    <property type="project" value="UniProtKB-KW"/>
</dbReference>
<dbReference type="GO" id="GO:0005506">
    <property type="term" value="F:iron ion binding"/>
    <property type="evidence" value="ECO:0007669"/>
    <property type="project" value="UniProtKB-UniRule"/>
</dbReference>
<dbReference type="GO" id="GO:0008137">
    <property type="term" value="F:NADH dehydrogenase (ubiquinone) activity"/>
    <property type="evidence" value="ECO:0007669"/>
    <property type="project" value="InterPro"/>
</dbReference>
<dbReference type="GO" id="GO:0048038">
    <property type="term" value="F:quinone binding"/>
    <property type="evidence" value="ECO:0007669"/>
    <property type="project" value="UniProtKB-KW"/>
</dbReference>
<dbReference type="GO" id="GO:0019684">
    <property type="term" value="P:photosynthesis, light reaction"/>
    <property type="evidence" value="ECO:0007669"/>
    <property type="project" value="UniProtKB-UniRule"/>
</dbReference>
<dbReference type="FunFam" id="3.30.70.3270:FF:000006">
    <property type="entry name" value="NAD(P)H-quinone oxidoreductase subunit I, chloroplastic"/>
    <property type="match status" value="1"/>
</dbReference>
<dbReference type="Gene3D" id="3.30.70.3270">
    <property type="match status" value="1"/>
</dbReference>
<dbReference type="HAMAP" id="MF_01351">
    <property type="entry name" value="NDH1_NuoI"/>
    <property type="match status" value="1"/>
</dbReference>
<dbReference type="InterPro" id="IPR017896">
    <property type="entry name" value="4Fe4S_Fe-S-bd"/>
</dbReference>
<dbReference type="InterPro" id="IPR017900">
    <property type="entry name" value="4Fe4S_Fe_S_CS"/>
</dbReference>
<dbReference type="InterPro" id="IPR010226">
    <property type="entry name" value="NADH_quinone_OxRdtase_chainI"/>
</dbReference>
<dbReference type="InterPro" id="IPR004497">
    <property type="entry name" value="NDHI"/>
</dbReference>
<dbReference type="NCBIfam" id="TIGR00403">
    <property type="entry name" value="ndhI"/>
    <property type="match status" value="1"/>
</dbReference>
<dbReference type="NCBIfam" id="TIGR01971">
    <property type="entry name" value="NuoI"/>
    <property type="match status" value="1"/>
</dbReference>
<dbReference type="NCBIfam" id="NF004537">
    <property type="entry name" value="PRK05888.1-3"/>
    <property type="match status" value="1"/>
</dbReference>
<dbReference type="PANTHER" id="PTHR47275">
    <property type="entry name" value="NAD(P)H-QUINONE OXIDOREDUCTASE SUBUNIT I, CHLOROPLASTIC"/>
    <property type="match status" value="1"/>
</dbReference>
<dbReference type="PANTHER" id="PTHR47275:SF1">
    <property type="entry name" value="NAD(P)H-QUINONE OXIDOREDUCTASE SUBUNIT I, CHLOROPLASTIC"/>
    <property type="match status" value="1"/>
</dbReference>
<dbReference type="Pfam" id="PF00037">
    <property type="entry name" value="Fer4"/>
    <property type="match status" value="2"/>
</dbReference>
<dbReference type="SUPFAM" id="SSF54862">
    <property type="entry name" value="4Fe-4S ferredoxins"/>
    <property type="match status" value="1"/>
</dbReference>
<dbReference type="PROSITE" id="PS00198">
    <property type="entry name" value="4FE4S_FER_1"/>
    <property type="match status" value="2"/>
</dbReference>
<dbReference type="PROSITE" id="PS51379">
    <property type="entry name" value="4FE4S_FER_2"/>
    <property type="match status" value="2"/>
</dbReference>
<feature type="chain" id="PRO_0000298580" description="NAD(P)H-quinone oxidoreductase subunit I, chloroplastic">
    <location>
        <begin position="1"/>
        <end position="180"/>
    </location>
</feature>
<feature type="domain" description="4Fe-4S ferredoxin-type 1" evidence="1">
    <location>
        <begin position="55"/>
        <end position="84"/>
    </location>
</feature>
<feature type="domain" description="4Fe-4S ferredoxin-type 2" evidence="1">
    <location>
        <begin position="95"/>
        <end position="124"/>
    </location>
</feature>
<feature type="binding site" evidence="1">
    <location>
        <position position="64"/>
    </location>
    <ligand>
        <name>[4Fe-4S] cluster</name>
        <dbReference type="ChEBI" id="CHEBI:49883"/>
        <label>1</label>
    </ligand>
</feature>
<feature type="binding site" evidence="1">
    <location>
        <position position="67"/>
    </location>
    <ligand>
        <name>[4Fe-4S] cluster</name>
        <dbReference type="ChEBI" id="CHEBI:49883"/>
        <label>1</label>
    </ligand>
</feature>
<feature type="binding site" evidence="1">
    <location>
        <position position="70"/>
    </location>
    <ligand>
        <name>[4Fe-4S] cluster</name>
        <dbReference type="ChEBI" id="CHEBI:49883"/>
        <label>1</label>
    </ligand>
</feature>
<feature type="binding site" evidence="1">
    <location>
        <position position="74"/>
    </location>
    <ligand>
        <name>[4Fe-4S] cluster</name>
        <dbReference type="ChEBI" id="CHEBI:49883"/>
        <label>2</label>
    </ligand>
</feature>
<feature type="binding site" evidence="1">
    <location>
        <position position="104"/>
    </location>
    <ligand>
        <name>[4Fe-4S] cluster</name>
        <dbReference type="ChEBI" id="CHEBI:49883"/>
        <label>2</label>
    </ligand>
</feature>
<feature type="binding site" evidence="1">
    <location>
        <position position="107"/>
    </location>
    <ligand>
        <name>[4Fe-4S] cluster</name>
        <dbReference type="ChEBI" id="CHEBI:49883"/>
        <label>2</label>
    </ligand>
</feature>
<feature type="binding site" evidence="1">
    <location>
        <position position="110"/>
    </location>
    <ligand>
        <name>[4Fe-4S] cluster</name>
        <dbReference type="ChEBI" id="CHEBI:49883"/>
        <label>2</label>
    </ligand>
</feature>
<feature type="binding site" evidence="1">
    <location>
        <position position="114"/>
    </location>
    <ligand>
        <name>[4Fe-4S] cluster</name>
        <dbReference type="ChEBI" id="CHEBI:49883"/>
        <label>1</label>
    </ligand>
</feature>
<protein>
    <recommendedName>
        <fullName evidence="1">NAD(P)H-quinone oxidoreductase subunit I, chloroplastic</fullName>
        <ecNumber evidence="1">7.1.1.-</ecNumber>
    </recommendedName>
    <alternativeName>
        <fullName evidence="1">NAD(P)H dehydrogenase subunit I</fullName>
        <shortName evidence="1">NDH subunit I</shortName>
    </alternativeName>
    <alternativeName>
        <fullName evidence="1">NADH-plastoquinone oxidoreductase subunit I</fullName>
    </alternativeName>
</protein>
<comment type="function">
    <text evidence="1">NDH shuttles electrons from NAD(P)H:plastoquinone, via FMN and iron-sulfur (Fe-S) centers, to quinones in the photosynthetic chain and possibly in a chloroplast respiratory chain. The immediate electron acceptor for the enzyme in this species is believed to be plastoquinone. Couples the redox reaction to proton translocation, and thus conserves the redox energy in a proton gradient.</text>
</comment>
<comment type="catalytic activity">
    <reaction evidence="1">
        <text>a plastoquinone + NADH + (n+1) H(+)(in) = a plastoquinol + NAD(+) + n H(+)(out)</text>
        <dbReference type="Rhea" id="RHEA:42608"/>
        <dbReference type="Rhea" id="RHEA-COMP:9561"/>
        <dbReference type="Rhea" id="RHEA-COMP:9562"/>
        <dbReference type="ChEBI" id="CHEBI:15378"/>
        <dbReference type="ChEBI" id="CHEBI:17757"/>
        <dbReference type="ChEBI" id="CHEBI:57540"/>
        <dbReference type="ChEBI" id="CHEBI:57945"/>
        <dbReference type="ChEBI" id="CHEBI:62192"/>
    </reaction>
</comment>
<comment type="catalytic activity">
    <reaction evidence="1">
        <text>a plastoquinone + NADPH + (n+1) H(+)(in) = a plastoquinol + NADP(+) + n H(+)(out)</text>
        <dbReference type="Rhea" id="RHEA:42612"/>
        <dbReference type="Rhea" id="RHEA-COMP:9561"/>
        <dbReference type="Rhea" id="RHEA-COMP:9562"/>
        <dbReference type="ChEBI" id="CHEBI:15378"/>
        <dbReference type="ChEBI" id="CHEBI:17757"/>
        <dbReference type="ChEBI" id="CHEBI:57783"/>
        <dbReference type="ChEBI" id="CHEBI:58349"/>
        <dbReference type="ChEBI" id="CHEBI:62192"/>
    </reaction>
</comment>
<comment type="cofactor">
    <cofactor evidence="1">
        <name>[4Fe-4S] cluster</name>
        <dbReference type="ChEBI" id="CHEBI:49883"/>
    </cofactor>
    <text evidence="1">Binds 2 [4Fe-4S] clusters per subunit.</text>
</comment>
<comment type="subunit">
    <text evidence="1">NDH is composed of at least 16 different subunits, 5 of which are encoded in the nucleus.</text>
</comment>
<comment type="subcellular location">
    <subcellularLocation>
        <location evidence="1">Plastid</location>
        <location evidence="1">Chloroplast thylakoid membrane</location>
        <topology evidence="1">Peripheral membrane protein</topology>
    </subcellularLocation>
</comment>
<comment type="similarity">
    <text evidence="1">Belongs to the complex I 23 kDa subunit family.</text>
</comment>
<accession>Q09FQ6</accession>
<sequence length="180" mass="20794">MFPMVTGFMNYGQQTVRAARYIGQSFMITLSHANRLPVTIQYPYEKLITSERFRGRIHFEFDKCIACEVCVRVCPIDLPVVDWKLETDIRKKRLLNYSIDFGICIFCGNCVEYCPTNCLSMTEEYELSTYDRHELNYNQIALGRLPMSVIGDYTIRTILNSTPIKKTAGNPLDSKTITNF</sequence>
<geneLocation type="chloroplast"/>
<gene>
    <name evidence="1" type="primary">ndhI</name>
</gene>